<proteinExistence type="inferred from homology"/>
<dbReference type="EMBL" id="CP000414">
    <property type="protein sequence ID" value="ABJ62441.1"/>
    <property type="molecule type" value="Genomic_DNA"/>
</dbReference>
<dbReference type="RefSeq" id="WP_011680048.1">
    <property type="nucleotide sequence ID" value="NC_008531.1"/>
</dbReference>
<dbReference type="SMR" id="Q03WI1"/>
<dbReference type="EnsemblBacteria" id="ABJ62441">
    <property type="protein sequence ID" value="ABJ62441"/>
    <property type="gene ID" value="LEUM_1348"/>
</dbReference>
<dbReference type="GeneID" id="29575930"/>
<dbReference type="KEGG" id="lme:LEUM_1348"/>
<dbReference type="eggNOG" id="COG0576">
    <property type="taxonomic scope" value="Bacteria"/>
</dbReference>
<dbReference type="HOGENOM" id="CLU_057217_6_3_9"/>
<dbReference type="Proteomes" id="UP000000362">
    <property type="component" value="Chromosome"/>
</dbReference>
<dbReference type="GO" id="GO:0005737">
    <property type="term" value="C:cytoplasm"/>
    <property type="evidence" value="ECO:0007669"/>
    <property type="project" value="UniProtKB-SubCell"/>
</dbReference>
<dbReference type="GO" id="GO:0000774">
    <property type="term" value="F:adenyl-nucleotide exchange factor activity"/>
    <property type="evidence" value="ECO:0007669"/>
    <property type="project" value="InterPro"/>
</dbReference>
<dbReference type="GO" id="GO:0042803">
    <property type="term" value="F:protein homodimerization activity"/>
    <property type="evidence" value="ECO:0007669"/>
    <property type="project" value="InterPro"/>
</dbReference>
<dbReference type="GO" id="GO:0051087">
    <property type="term" value="F:protein-folding chaperone binding"/>
    <property type="evidence" value="ECO:0007669"/>
    <property type="project" value="InterPro"/>
</dbReference>
<dbReference type="GO" id="GO:0051082">
    <property type="term" value="F:unfolded protein binding"/>
    <property type="evidence" value="ECO:0007669"/>
    <property type="project" value="TreeGrafter"/>
</dbReference>
<dbReference type="GO" id="GO:0006457">
    <property type="term" value="P:protein folding"/>
    <property type="evidence" value="ECO:0007669"/>
    <property type="project" value="InterPro"/>
</dbReference>
<dbReference type="CDD" id="cd00446">
    <property type="entry name" value="GrpE"/>
    <property type="match status" value="1"/>
</dbReference>
<dbReference type="FunFam" id="2.30.22.10:FF:000001">
    <property type="entry name" value="Protein GrpE"/>
    <property type="match status" value="1"/>
</dbReference>
<dbReference type="Gene3D" id="3.90.20.20">
    <property type="match status" value="1"/>
</dbReference>
<dbReference type="Gene3D" id="2.30.22.10">
    <property type="entry name" value="Head domain of nucleotide exchange factor GrpE"/>
    <property type="match status" value="1"/>
</dbReference>
<dbReference type="HAMAP" id="MF_01151">
    <property type="entry name" value="GrpE"/>
    <property type="match status" value="1"/>
</dbReference>
<dbReference type="InterPro" id="IPR000740">
    <property type="entry name" value="GrpE"/>
</dbReference>
<dbReference type="InterPro" id="IPR013805">
    <property type="entry name" value="GrpE_coiled_coil"/>
</dbReference>
<dbReference type="InterPro" id="IPR009012">
    <property type="entry name" value="GrpE_head"/>
</dbReference>
<dbReference type="NCBIfam" id="NF010738">
    <property type="entry name" value="PRK14140.1"/>
    <property type="match status" value="1"/>
</dbReference>
<dbReference type="NCBIfam" id="NF010748">
    <property type="entry name" value="PRK14150.1"/>
    <property type="match status" value="1"/>
</dbReference>
<dbReference type="NCBIfam" id="NF010759">
    <property type="entry name" value="PRK14162.1"/>
    <property type="match status" value="1"/>
</dbReference>
<dbReference type="PANTHER" id="PTHR21237">
    <property type="entry name" value="GRPE PROTEIN"/>
    <property type="match status" value="1"/>
</dbReference>
<dbReference type="PANTHER" id="PTHR21237:SF23">
    <property type="entry name" value="GRPE PROTEIN HOMOLOG, MITOCHONDRIAL"/>
    <property type="match status" value="1"/>
</dbReference>
<dbReference type="Pfam" id="PF01025">
    <property type="entry name" value="GrpE"/>
    <property type="match status" value="1"/>
</dbReference>
<dbReference type="PRINTS" id="PR00773">
    <property type="entry name" value="GRPEPROTEIN"/>
</dbReference>
<dbReference type="SUPFAM" id="SSF58014">
    <property type="entry name" value="Coiled-coil domain of nucleotide exchange factor GrpE"/>
    <property type="match status" value="1"/>
</dbReference>
<dbReference type="SUPFAM" id="SSF51064">
    <property type="entry name" value="Head domain of nucleotide exchange factor GrpE"/>
    <property type="match status" value="1"/>
</dbReference>
<dbReference type="PROSITE" id="PS01071">
    <property type="entry name" value="GRPE"/>
    <property type="match status" value="1"/>
</dbReference>
<reference key="1">
    <citation type="journal article" date="2006" name="Proc. Natl. Acad. Sci. U.S.A.">
        <title>Comparative genomics of the lactic acid bacteria.</title>
        <authorList>
            <person name="Makarova K.S."/>
            <person name="Slesarev A."/>
            <person name="Wolf Y.I."/>
            <person name="Sorokin A."/>
            <person name="Mirkin B."/>
            <person name="Koonin E.V."/>
            <person name="Pavlov A."/>
            <person name="Pavlova N."/>
            <person name="Karamychev V."/>
            <person name="Polouchine N."/>
            <person name="Shakhova V."/>
            <person name="Grigoriev I."/>
            <person name="Lou Y."/>
            <person name="Rohksar D."/>
            <person name="Lucas S."/>
            <person name="Huang K."/>
            <person name="Goodstein D.M."/>
            <person name="Hawkins T."/>
            <person name="Plengvidhya V."/>
            <person name="Welker D."/>
            <person name="Hughes J."/>
            <person name="Goh Y."/>
            <person name="Benson A."/>
            <person name="Baldwin K."/>
            <person name="Lee J.-H."/>
            <person name="Diaz-Muniz I."/>
            <person name="Dosti B."/>
            <person name="Smeianov V."/>
            <person name="Wechter W."/>
            <person name="Barabote R."/>
            <person name="Lorca G."/>
            <person name="Altermann E."/>
            <person name="Barrangou R."/>
            <person name="Ganesan B."/>
            <person name="Xie Y."/>
            <person name="Rawsthorne H."/>
            <person name="Tamir D."/>
            <person name="Parker C."/>
            <person name="Breidt F."/>
            <person name="Broadbent J.R."/>
            <person name="Hutkins R."/>
            <person name="O'Sullivan D."/>
            <person name="Steele J."/>
            <person name="Unlu G."/>
            <person name="Saier M.H. Jr."/>
            <person name="Klaenhammer T."/>
            <person name="Richardson P."/>
            <person name="Kozyavkin S."/>
            <person name="Weimer B.C."/>
            <person name="Mills D.A."/>
        </authorList>
    </citation>
    <scope>NUCLEOTIDE SEQUENCE [LARGE SCALE GENOMIC DNA]</scope>
    <source>
        <strain>ATCC 8293 / DSM 20343 / BCRC 11652 / CCM 1803 / JCM 6124 / NCDO 523 / NBRC 100496 / NCIMB 8023 / NCTC 12954 / NRRL B-1118 / 37Y</strain>
    </source>
</reference>
<protein>
    <recommendedName>
        <fullName evidence="1">Protein GrpE</fullName>
    </recommendedName>
    <alternativeName>
        <fullName evidence="1">HSP-70 cofactor</fullName>
    </alternativeName>
</protein>
<comment type="function">
    <text evidence="1">Participates actively in the response to hyperosmotic and heat shock by preventing the aggregation of stress-denatured proteins, in association with DnaK and GrpE. It is the nucleotide exchange factor for DnaK and may function as a thermosensor. Unfolded proteins bind initially to DnaJ; upon interaction with the DnaJ-bound protein, DnaK hydrolyzes its bound ATP, resulting in the formation of a stable complex. GrpE releases ADP from DnaK; ATP binding to DnaK triggers the release of the substrate protein, thus completing the reaction cycle. Several rounds of ATP-dependent interactions between DnaJ, DnaK and GrpE are required for fully efficient folding.</text>
</comment>
<comment type="subunit">
    <text evidence="1">Homodimer.</text>
</comment>
<comment type="subcellular location">
    <subcellularLocation>
        <location evidence="1">Cytoplasm</location>
    </subcellularLocation>
</comment>
<comment type="similarity">
    <text evidence="1">Belongs to the GrpE family.</text>
</comment>
<name>GRPE_LEUMM</name>
<gene>
    <name evidence="1" type="primary">grpE</name>
    <name type="ordered locus">LEUM_1348</name>
</gene>
<evidence type="ECO:0000255" key="1">
    <source>
        <dbReference type="HAMAP-Rule" id="MF_01151"/>
    </source>
</evidence>
<evidence type="ECO:0000256" key="2">
    <source>
        <dbReference type="SAM" id="MobiDB-lite"/>
    </source>
</evidence>
<accession>Q03WI1</accession>
<feature type="chain" id="PRO_1000065519" description="Protein GrpE">
    <location>
        <begin position="1"/>
        <end position="189"/>
    </location>
</feature>
<feature type="region of interest" description="Disordered" evidence="2">
    <location>
        <begin position="1"/>
        <end position="38"/>
    </location>
</feature>
<feature type="compositionally biased region" description="Basic and acidic residues" evidence="2">
    <location>
        <begin position="1"/>
        <end position="14"/>
    </location>
</feature>
<feature type="compositionally biased region" description="Acidic residues" evidence="2">
    <location>
        <begin position="17"/>
        <end position="35"/>
    </location>
</feature>
<organism>
    <name type="scientific">Leuconostoc mesenteroides subsp. mesenteroides (strain ATCC 8293 / DSM 20343 / BCRC 11652 / CCM 1803 / JCM 6124 / NCDO 523 / NBRC 100496 / NCIMB 8023 / NCTC 12954 / NRRL B-1118 / 37Y)</name>
    <dbReference type="NCBI Taxonomy" id="203120"/>
    <lineage>
        <taxon>Bacteria</taxon>
        <taxon>Bacillati</taxon>
        <taxon>Bacillota</taxon>
        <taxon>Bacilli</taxon>
        <taxon>Lactobacillales</taxon>
        <taxon>Lactobacillaceae</taxon>
        <taxon>Leuconostoc</taxon>
    </lineage>
</organism>
<sequence length="189" mass="21171">MTEKNEEVVEDKNISDQTDENLTEEIESEADDLQVEPDPKQAEIDKLTEQVNNLEEKLLRSQAEIQNIQQRNARELQNVRKYDGQKLASAVLPAVDNLERALQVEANDEVSKQIKTGVEMTLKTLNQALTDNGITSTGEIGESFDPTKHQAIQSVESDEVESDQIAQVLQKGYILQDRVIRPAMVAVAK</sequence>
<keyword id="KW-0143">Chaperone</keyword>
<keyword id="KW-0963">Cytoplasm</keyword>
<keyword id="KW-1185">Reference proteome</keyword>
<keyword id="KW-0346">Stress response</keyword>